<keyword id="KW-0002">3D-structure</keyword>
<keyword id="KW-0903">Direct protein sequencing</keyword>
<keyword id="KW-0496">Mitochondrion</keyword>
<keyword id="KW-1185">Reference proteome</keyword>
<keyword id="KW-0687">Ribonucleoprotein</keyword>
<keyword id="KW-0689">Ribosomal protein</keyword>
<evidence type="ECO:0000269" key="1">
    <source>
    </source>
</evidence>
<evidence type="ECO:0000269" key="2">
    <source>
    </source>
</evidence>
<evidence type="ECO:0000269" key="3">
    <source>
    </source>
</evidence>
<evidence type="ECO:0000269" key="4">
    <source>
    </source>
</evidence>
<evidence type="ECO:0000269" key="5">
    <source>
    </source>
</evidence>
<evidence type="ECO:0000269" key="6">
    <source>
    </source>
</evidence>
<evidence type="ECO:0000269" key="7">
    <source>
    </source>
</evidence>
<evidence type="ECO:0000303" key="8">
    <source>
    </source>
</evidence>
<evidence type="ECO:0000305" key="9"/>
<evidence type="ECO:0000305" key="10">
    <source>
    </source>
</evidence>
<evidence type="ECO:0000305" key="11">
    <source>
    </source>
</evidence>
<protein>
    <recommendedName>
        <fullName evidence="8">Large ribosomal subunit protein uL14m</fullName>
    </recommendedName>
    <alternativeName>
        <fullName>54S ribosomal protein L38, mitochondrial</fullName>
    </alternativeName>
    <alternativeName>
        <fullName>YmL38</fullName>
    </alternativeName>
    <component>
        <recommendedName>
            <fullName>54S ribosomal protein L34, mitochondrial</fullName>
        </recommendedName>
        <alternativeName>
            <fullName>YmL34</fullName>
        </alternativeName>
    </component>
</protein>
<organism>
    <name type="scientific">Saccharomyces cerevisiae (strain ATCC 204508 / S288c)</name>
    <name type="common">Baker's yeast</name>
    <dbReference type="NCBI Taxonomy" id="559292"/>
    <lineage>
        <taxon>Eukaryota</taxon>
        <taxon>Fungi</taxon>
        <taxon>Dikarya</taxon>
        <taxon>Ascomycota</taxon>
        <taxon>Saccharomycotina</taxon>
        <taxon>Saccharomycetes</taxon>
        <taxon>Saccharomycetales</taxon>
        <taxon>Saccharomycetaceae</taxon>
        <taxon>Saccharomyces</taxon>
    </lineage>
</organism>
<name>RM38_YEAST</name>
<sequence>MIFLKSVIKVIDNSGAQLAECIKVIRKGSPKSPAMVGDRIVCVIQKAKPLTQNITGTANTNRVKKGDICHAIVVRSKQRNMCRKDGSTVAFGDTACVLINKNTGEPLGTRIMANDGCVDRTLKDKGYNKICSLASRVI</sequence>
<reference key="1">
    <citation type="journal article" date="1994" name="Yeast">
        <title>Sequencing and analysis of a 20.5 kb DNA segment located on the left arm of yeast chromosome XI.</title>
        <authorList>
            <person name="Vandenbol M."/>
            <person name="Bolle P.-A."/>
            <person name="Dion C."/>
            <person name="Portetelle D."/>
            <person name="Hilger F."/>
        </authorList>
    </citation>
    <scope>NUCLEOTIDE SEQUENCE [GENOMIC DNA]</scope>
    <source>
        <strain>ATCC 204508 / S288c</strain>
    </source>
</reference>
<reference key="2">
    <citation type="journal article" date="1994" name="Nature">
        <title>Complete DNA sequence of yeast chromosome XI.</title>
        <authorList>
            <person name="Dujon B."/>
            <person name="Alexandraki D."/>
            <person name="Andre B."/>
            <person name="Ansorge W."/>
            <person name="Baladron V."/>
            <person name="Ballesta J.P.G."/>
            <person name="Banrevi A."/>
            <person name="Bolle P.-A."/>
            <person name="Bolotin-Fukuhara M."/>
            <person name="Bossier P."/>
            <person name="Bou G."/>
            <person name="Boyer J."/>
            <person name="Buitrago M.J."/>
            <person name="Cheret G."/>
            <person name="Colleaux L."/>
            <person name="Daignan-Fornier B."/>
            <person name="del Rey F."/>
            <person name="Dion C."/>
            <person name="Domdey H."/>
            <person name="Duesterhoeft A."/>
            <person name="Duesterhus S."/>
            <person name="Entian K.-D."/>
            <person name="Erfle H."/>
            <person name="Esteban P.F."/>
            <person name="Feldmann H."/>
            <person name="Fernandes L."/>
            <person name="Fobo G.M."/>
            <person name="Fritz C."/>
            <person name="Fukuhara H."/>
            <person name="Gabel C."/>
            <person name="Gaillon L."/>
            <person name="Garcia-Cantalejo J.M."/>
            <person name="Garcia-Ramirez J.J."/>
            <person name="Gent M.E."/>
            <person name="Ghazvini M."/>
            <person name="Goffeau A."/>
            <person name="Gonzalez A."/>
            <person name="Grothues D."/>
            <person name="Guerreiro P."/>
            <person name="Hegemann J.H."/>
            <person name="Hewitt N."/>
            <person name="Hilger F."/>
            <person name="Hollenberg C.P."/>
            <person name="Horaitis O."/>
            <person name="Indge K.J."/>
            <person name="Jacquier A."/>
            <person name="James C.M."/>
            <person name="Jauniaux J.-C."/>
            <person name="Jimenez A."/>
            <person name="Keuchel H."/>
            <person name="Kirchrath L."/>
            <person name="Kleine K."/>
            <person name="Koetter P."/>
            <person name="Legrain P."/>
            <person name="Liebl S."/>
            <person name="Louis E.J."/>
            <person name="Maia e Silva A."/>
            <person name="Marck C."/>
            <person name="Monnier A.-L."/>
            <person name="Moestl D."/>
            <person name="Mueller S."/>
            <person name="Obermaier B."/>
            <person name="Oliver S.G."/>
            <person name="Pallier C."/>
            <person name="Pascolo S."/>
            <person name="Pfeiffer F."/>
            <person name="Philippsen P."/>
            <person name="Planta R.J."/>
            <person name="Pohl F.M."/>
            <person name="Pohl T.M."/>
            <person name="Poehlmann R."/>
            <person name="Portetelle D."/>
            <person name="Purnelle B."/>
            <person name="Puzos V."/>
            <person name="Ramezani Rad M."/>
            <person name="Rasmussen S.W."/>
            <person name="Remacha M.A."/>
            <person name="Revuelta J.L."/>
            <person name="Richard G.-F."/>
            <person name="Rieger M."/>
            <person name="Rodrigues-Pousada C."/>
            <person name="Rose M."/>
            <person name="Rupp T."/>
            <person name="Santos M.A."/>
            <person name="Schwager C."/>
            <person name="Sensen C."/>
            <person name="Skala J."/>
            <person name="Soares H."/>
            <person name="Sor F."/>
            <person name="Stegemann J."/>
            <person name="Tettelin H."/>
            <person name="Thierry A."/>
            <person name="Tzermia M."/>
            <person name="Urrestarazu L.A."/>
            <person name="van Dyck L."/>
            <person name="van Vliet-Reedijk J.C."/>
            <person name="Valens M."/>
            <person name="Vandenbol M."/>
            <person name="Vilela C."/>
            <person name="Vissers S."/>
            <person name="von Wettstein D."/>
            <person name="Voss H."/>
            <person name="Wiemann S."/>
            <person name="Xu G."/>
            <person name="Zimmermann J."/>
            <person name="Haasemann M."/>
            <person name="Becker I."/>
            <person name="Mewes H.-W."/>
        </authorList>
    </citation>
    <scope>NUCLEOTIDE SEQUENCE [LARGE SCALE GENOMIC DNA]</scope>
    <source>
        <strain>ATCC 204508 / S288c</strain>
    </source>
</reference>
<reference key="3">
    <citation type="journal article" date="2014" name="G3 (Bethesda)">
        <title>The reference genome sequence of Saccharomyces cerevisiae: Then and now.</title>
        <authorList>
            <person name="Engel S.R."/>
            <person name="Dietrich F.S."/>
            <person name="Fisk D.G."/>
            <person name="Binkley G."/>
            <person name="Balakrishnan R."/>
            <person name="Costanzo M.C."/>
            <person name="Dwight S.S."/>
            <person name="Hitz B.C."/>
            <person name="Karra K."/>
            <person name="Nash R.S."/>
            <person name="Weng S."/>
            <person name="Wong E.D."/>
            <person name="Lloyd P."/>
            <person name="Skrzypek M.S."/>
            <person name="Miyasato S.R."/>
            <person name="Simison M."/>
            <person name="Cherry J.M."/>
        </authorList>
    </citation>
    <scope>GENOME REANNOTATION</scope>
    <source>
        <strain>ATCC 204508 / S288c</strain>
    </source>
</reference>
<reference key="4">
    <citation type="journal article" date="2007" name="Genome Res.">
        <title>Approaching a complete repository of sequence-verified protein-encoding clones for Saccharomyces cerevisiae.</title>
        <authorList>
            <person name="Hu Y."/>
            <person name="Rolfs A."/>
            <person name="Bhullar B."/>
            <person name="Murthy T.V.S."/>
            <person name="Zhu C."/>
            <person name="Berger M.F."/>
            <person name="Camargo A.A."/>
            <person name="Kelley F."/>
            <person name="McCarron S."/>
            <person name="Jepson D."/>
            <person name="Richardson A."/>
            <person name="Raphael J."/>
            <person name="Moreira D."/>
            <person name="Taycher E."/>
            <person name="Zuo D."/>
            <person name="Mohr S."/>
            <person name="Kane M.F."/>
            <person name="Williamson J."/>
            <person name="Simpson A.J.G."/>
            <person name="Bulyk M.L."/>
            <person name="Harlow E."/>
            <person name="Marsischky G."/>
            <person name="Kolodner R.D."/>
            <person name="LaBaer J."/>
        </authorList>
    </citation>
    <scope>NUCLEOTIDE SEQUENCE [GENOMIC DNA]</scope>
    <source>
        <strain>ATCC 204508 / S288c</strain>
    </source>
</reference>
<reference key="5">
    <citation type="journal article" date="1991" name="FEBS Lett.">
        <title>Extended N-terminal sequencing of proteins of the large ribosomal subunit from yeast mitochondria.</title>
        <authorList>
            <person name="Grohmann L."/>
            <person name="Graack H.-R."/>
            <person name="Kruft V."/>
            <person name="Choli T."/>
            <person name="Goldschmidt-Reisin S."/>
            <person name="Kitakawa M."/>
        </authorList>
    </citation>
    <scope>PROTEIN SEQUENCE OF 1-28 AND 58-85</scope>
    <scope>SUBUNIT</scope>
    <source>
        <strain>07173</strain>
    </source>
</reference>
<reference key="6">
    <citation type="journal article" date="1997" name="Eur. J. Biochem.">
        <title>Identification and characterization of the genes for mitochondrial ribosomal proteins of Saccharomyces cerevisiae.</title>
        <authorList>
            <person name="Kitakawa M."/>
            <person name="Graack H.-R."/>
            <person name="Grohmann L."/>
            <person name="Goldschmidt-Reisin S."/>
            <person name="Herfurth E."/>
            <person name="Wittmann-Liebold B."/>
            <person name="Nishimura T."/>
            <person name="Isono K."/>
        </authorList>
    </citation>
    <scope>IDENTIFICATION OF L34 AS A FRAGMENT OF L38</scope>
</reference>
<reference key="7">
    <citation type="journal article" date="2002" name="Eur. J. Biochem.">
        <title>Tag-mediated isolation of yeast mitochondrial ribosome and mass spectrometric identification of its new components.</title>
        <authorList>
            <person name="Gan X."/>
            <person name="Kitakawa M."/>
            <person name="Yoshino K."/>
            <person name="Oshiro N."/>
            <person name="Yonezawa K."/>
            <person name="Isono K."/>
        </authorList>
    </citation>
    <scope>IDENTIFICATION IN THE MITOCHONDRIAL RIBOSOMAL LARGE COMPLEX</scope>
    <scope>IDENTIFICATION BY MASS SPECTROMETRY</scope>
</reference>
<reference key="8">
    <citation type="journal article" date="2003" name="Nature">
        <title>Global analysis of protein localization in budding yeast.</title>
        <authorList>
            <person name="Huh W.-K."/>
            <person name="Falvo J.V."/>
            <person name="Gerke L.C."/>
            <person name="Carroll A.S."/>
            <person name="Howson R.W."/>
            <person name="Weissman J.S."/>
            <person name="O'Shea E.K."/>
        </authorList>
    </citation>
    <scope>SUBCELLULAR LOCATION [LARGE SCALE ANALYSIS]</scope>
</reference>
<reference key="9">
    <citation type="journal article" date="2003" name="Nature">
        <title>Global analysis of protein expression in yeast.</title>
        <authorList>
            <person name="Ghaemmaghami S."/>
            <person name="Huh W.-K."/>
            <person name="Bower K."/>
            <person name="Howson R.W."/>
            <person name="Belle A."/>
            <person name="Dephoure N."/>
            <person name="O'Shea E.K."/>
            <person name="Weissman J.S."/>
        </authorList>
    </citation>
    <scope>LEVEL OF PROTEIN EXPRESSION [LARGE SCALE ANALYSIS]</scope>
</reference>
<reference key="10">
    <citation type="journal article" date="2006" name="J. Proteome Res.">
        <title>Toward the complete yeast mitochondrial proteome: multidimensional separation techniques for mitochondrial proteomics.</title>
        <authorList>
            <person name="Reinders J."/>
            <person name="Zahedi R.P."/>
            <person name="Pfanner N."/>
            <person name="Meisinger C."/>
            <person name="Sickmann A."/>
        </authorList>
    </citation>
    <scope>SUBCELLULAR LOCATION [LARGE SCALE ANALYSIS]</scope>
    <scope>IDENTIFICATION BY MASS SPECTROMETRY</scope>
</reference>
<reference key="11">
    <citation type="journal article" date="2015" name="Nat. Commun.">
        <title>Organization of the mitochondrial translation machinery studied in situ by cryoelectron tomography.</title>
        <authorList>
            <person name="Pfeffer S."/>
            <person name="Woellhaf M.W."/>
            <person name="Herrmann J.M."/>
            <person name="Forster F."/>
        </authorList>
    </citation>
    <scope>SUBCELLULAR LOCATION</scope>
</reference>
<reference key="12">
    <citation type="journal article" date="2014" name="Science">
        <title>Structure of the yeast mitochondrial large ribosomal subunit.</title>
        <authorList>
            <person name="Amunts A."/>
            <person name="Brown A."/>
            <person name="Bai X.C."/>
            <person name="Llacer J.L."/>
            <person name="Hussain T."/>
            <person name="Emsley P."/>
            <person name="Long F."/>
            <person name="Murshudov G."/>
            <person name="Scheres S.H."/>
            <person name="Ramakrishnan V."/>
        </authorList>
    </citation>
    <scope>STRUCTURE BY ELECTRON MICROSCOPY (3.20 ANGSTROMS)</scope>
    <scope>SUBUNIT</scope>
</reference>
<comment type="function">
    <text evidence="10 11">Component of the mitochondrial ribosome (mitoribosome), a dedicated translation machinery responsible for the synthesis of mitochondrial genome-encoded proteins, including at least some of the essential transmembrane subunits of the mitochondrial respiratory chain. The mitoribosomes are attached to the mitochondrial inner membrane and translation products are cotranslationally integrated into the membrane.</text>
</comment>
<comment type="subunit">
    <text evidence="1 5 6">Component of the mitochondrial large ribosomal subunit (mt-LSU). Mature yeast 74S mitochondrial ribosomes consist of a small (37S) and a large (54S) subunit. The 37S small subunit contains a 15S ribosomal RNA (15S mt-rRNA) and 34 different proteins. The 54S large subunit contains a 21S rRNA (21S mt-rRNA) and 46 different proteins.</text>
</comment>
<comment type="subcellular location">
    <subcellularLocation>
        <location evidence="2 4">Mitochondrion</location>
    </subcellularLocation>
    <text evidence="7">Mitoribosomes are tethered to the mitochondrial inner membrane and spatially aligned with the membrane insertion machinery through two distinct membrane contact sites, formed by the 21S rRNA expansion segment 96-ES1 and the inner membrane protein MBA1.</text>
</comment>
<comment type="miscellaneous">
    <text evidence="3">Present with 2500 molecules/cell in log phase SD medium.</text>
</comment>
<comment type="similarity">
    <text evidence="9">Belongs to the universal ribosomal protein uL14 family.</text>
</comment>
<gene>
    <name type="primary">MRPL38</name>
    <name type="synonym">MRPL34</name>
    <name type="ordered locus">YKL170W</name>
    <name type="ORF">YKL634</name>
</gene>
<dbReference type="EMBL" id="Z26878">
    <property type="protein sequence ID" value="CAA81517.1"/>
    <property type="molecule type" value="Genomic_DNA"/>
</dbReference>
<dbReference type="EMBL" id="Z28169">
    <property type="protein sequence ID" value="CAA82011.1"/>
    <property type="molecule type" value="Genomic_DNA"/>
</dbReference>
<dbReference type="EMBL" id="AY693037">
    <property type="protein sequence ID" value="AAT93056.1"/>
    <property type="molecule type" value="Genomic_DNA"/>
</dbReference>
<dbReference type="EMBL" id="BK006944">
    <property type="protein sequence ID" value="DAA08996.1"/>
    <property type="molecule type" value="Genomic_DNA"/>
</dbReference>
<dbReference type="PIR" id="S38000">
    <property type="entry name" value="S38000"/>
</dbReference>
<dbReference type="RefSeq" id="NP_012751.1">
    <property type="nucleotide sequence ID" value="NM_001179736.1"/>
</dbReference>
<dbReference type="PDB" id="3J6B">
    <property type="method" value="EM"/>
    <property type="resolution" value="3.20 A"/>
    <property type="chains" value="I=1-138"/>
</dbReference>
<dbReference type="PDB" id="5MRC">
    <property type="method" value="EM"/>
    <property type="resolution" value="3.25 A"/>
    <property type="chains" value="I=1-138"/>
</dbReference>
<dbReference type="PDB" id="5MRE">
    <property type="method" value="EM"/>
    <property type="resolution" value="3.75 A"/>
    <property type="chains" value="I=1-138"/>
</dbReference>
<dbReference type="PDB" id="5MRF">
    <property type="method" value="EM"/>
    <property type="resolution" value="4.97 A"/>
    <property type="chains" value="I=1-138"/>
</dbReference>
<dbReference type="PDBsum" id="3J6B"/>
<dbReference type="PDBsum" id="5MRC"/>
<dbReference type="PDBsum" id="5MRE"/>
<dbReference type="PDBsum" id="5MRF"/>
<dbReference type="EMDB" id="EMD-3551"/>
<dbReference type="EMDB" id="EMD-3552"/>
<dbReference type="EMDB" id="EMD-3553"/>
<dbReference type="SMR" id="P35996"/>
<dbReference type="BioGRID" id="33968">
    <property type="interactions" value="149"/>
</dbReference>
<dbReference type="ComplexPortal" id="CPX-1602">
    <property type="entry name" value="54S mitochondrial large ribosomal subunit"/>
</dbReference>
<dbReference type="DIP" id="DIP-6834N"/>
<dbReference type="FunCoup" id="P35996">
    <property type="interactions" value="540"/>
</dbReference>
<dbReference type="IntAct" id="P35996">
    <property type="interactions" value="70"/>
</dbReference>
<dbReference type="STRING" id="4932.YKL170W"/>
<dbReference type="iPTMnet" id="P35996"/>
<dbReference type="PaxDb" id="4932-YKL170W"/>
<dbReference type="PeptideAtlas" id="P35996"/>
<dbReference type="EnsemblFungi" id="YKL170W_mRNA">
    <property type="protein sequence ID" value="YKL170W"/>
    <property type="gene ID" value="YKL170W"/>
</dbReference>
<dbReference type="GeneID" id="853684"/>
<dbReference type="KEGG" id="sce:YKL170W"/>
<dbReference type="AGR" id="SGD:S000001653"/>
<dbReference type="SGD" id="S000001653">
    <property type="gene designation" value="MRPL38"/>
</dbReference>
<dbReference type="VEuPathDB" id="FungiDB:YKL170W"/>
<dbReference type="eggNOG" id="KOG0901">
    <property type="taxonomic scope" value="Eukaryota"/>
</dbReference>
<dbReference type="GeneTree" id="ENSGT00940000176605"/>
<dbReference type="HOGENOM" id="CLU_095071_2_0_1"/>
<dbReference type="InParanoid" id="P35996"/>
<dbReference type="OMA" id="IVCVVQK"/>
<dbReference type="OrthoDB" id="274765at2759"/>
<dbReference type="BioCyc" id="YEAST:G3O-31937-MONOMER"/>
<dbReference type="BioGRID-ORCS" id="853684">
    <property type="hits" value="5 hits in 10 CRISPR screens"/>
</dbReference>
<dbReference type="PRO" id="PR:P35996"/>
<dbReference type="Proteomes" id="UP000002311">
    <property type="component" value="Chromosome XI"/>
</dbReference>
<dbReference type="RNAct" id="P35996">
    <property type="molecule type" value="protein"/>
</dbReference>
<dbReference type="GO" id="GO:0005743">
    <property type="term" value="C:mitochondrial inner membrane"/>
    <property type="evidence" value="ECO:0000303"/>
    <property type="project" value="ComplexPortal"/>
</dbReference>
<dbReference type="GO" id="GO:0005762">
    <property type="term" value="C:mitochondrial large ribosomal subunit"/>
    <property type="evidence" value="ECO:0000314"/>
    <property type="project" value="SGD"/>
</dbReference>
<dbReference type="GO" id="GO:0005739">
    <property type="term" value="C:mitochondrion"/>
    <property type="evidence" value="ECO:0007005"/>
    <property type="project" value="SGD"/>
</dbReference>
<dbReference type="GO" id="GO:0070180">
    <property type="term" value="F:large ribosomal subunit rRNA binding"/>
    <property type="evidence" value="ECO:0000318"/>
    <property type="project" value="GO_Central"/>
</dbReference>
<dbReference type="GO" id="GO:0003735">
    <property type="term" value="F:structural constituent of ribosome"/>
    <property type="evidence" value="ECO:0000314"/>
    <property type="project" value="SGD"/>
</dbReference>
<dbReference type="GO" id="GO:0032543">
    <property type="term" value="P:mitochondrial translation"/>
    <property type="evidence" value="ECO:0000303"/>
    <property type="project" value="ComplexPortal"/>
</dbReference>
<dbReference type="CDD" id="cd00337">
    <property type="entry name" value="Ribosomal_uL14"/>
    <property type="match status" value="1"/>
</dbReference>
<dbReference type="FunFam" id="2.40.150.20:FF:000005">
    <property type="entry name" value="50S ribosomal protein L14"/>
    <property type="match status" value="1"/>
</dbReference>
<dbReference type="Gene3D" id="2.40.150.20">
    <property type="entry name" value="Ribosomal protein L14"/>
    <property type="match status" value="1"/>
</dbReference>
<dbReference type="HAMAP" id="MF_01367">
    <property type="entry name" value="Ribosomal_uL14"/>
    <property type="match status" value="1"/>
</dbReference>
<dbReference type="InterPro" id="IPR000218">
    <property type="entry name" value="Ribosomal_uL14"/>
</dbReference>
<dbReference type="InterPro" id="IPR005745">
    <property type="entry name" value="Ribosomal_uL14_bac-type"/>
</dbReference>
<dbReference type="InterPro" id="IPR019972">
    <property type="entry name" value="Ribosomal_uL14_CS"/>
</dbReference>
<dbReference type="InterPro" id="IPR036853">
    <property type="entry name" value="Ribosomal_uL14_sf"/>
</dbReference>
<dbReference type="NCBIfam" id="TIGR01067">
    <property type="entry name" value="rplN_bact"/>
    <property type="match status" value="1"/>
</dbReference>
<dbReference type="PANTHER" id="PTHR11761">
    <property type="entry name" value="50S/60S RIBOSOMAL PROTEIN L14/L23"/>
    <property type="match status" value="1"/>
</dbReference>
<dbReference type="PANTHER" id="PTHR11761:SF3">
    <property type="entry name" value="LARGE RIBOSOMAL SUBUNIT PROTEIN UL14M"/>
    <property type="match status" value="1"/>
</dbReference>
<dbReference type="Pfam" id="PF00238">
    <property type="entry name" value="Ribosomal_L14"/>
    <property type="match status" value="1"/>
</dbReference>
<dbReference type="SMART" id="SM01374">
    <property type="entry name" value="Ribosomal_L14"/>
    <property type="match status" value="1"/>
</dbReference>
<dbReference type="SUPFAM" id="SSF50193">
    <property type="entry name" value="Ribosomal protein L14"/>
    <property type="match status" value="1"/>
</dbReference>
<dbReference type="PROSITE" id="PS00049">
    <property type="entry name" value="RIBOSOMAL_L14"/>
    <property type="match status" value="1"/>
</dbReference>
<accession>P35996</accession>
<accession>D6VX30</accession>
<accession>P36529</accession>
<proteinExistence type="evidence at protein level"/>
<feature type="chain" id="PRO_0000030464" description="Large ribosomal subunit protein uL14m">
    <location>
        <begin position="1"/>
        <end position="138"/>
    </location>
</feature>
<feature type="chain" id="PRO_0000030465" description="54S ribosomal protein L34, mitochondrial">
    <location>
        <begin position="58"/>
        <end position="138"/>
    </location>
</feature>
<feature type="sequence conflict" description="In Ref. 5; AA sequence." evidence="9" ref="5">
    <original>T</original>
    <variation>A</variation>
    <location>
        <position position="60"/>
    </location>
</feature>
<feature type="sequence conflict" description="In Ref. 5; AA sequence." evidence="9" ref="5">
    <original>CH</original>
    <variation>DI</variation>
    <location>
        <begin position="69"/>
        <end position="70"/>
    </location>
</feature>